<accession>A9VRF5</accession>
<gene>
    <name evidence="1" type="primary">purH</name>
    <name type="ordered locus">BcerKBAB4_0279</name>
</gene>
<name>PUR9_BACMK</name>
<reference key="1">
    <citation type="journal article" date="2008" name="Chem. Biol. Interact.">
        <title>Extending the Bacillus cereus group genomics to putative food-borne pathogens of different toxicity.</title>
        <authorList>
            <person name="Lapidus A."/>
            <person name="Goltsman E."/>
            <person name="Auger S."/>
            <person name="Galleron N."/>
            <person name="Segurens B."/>
            <person name="Dossat C."/>
            <person name="Land M.L."/>
            <person name="Broussolle V."/>
            <person name="Brillard J."/>
            <person name="Guinebretiere M.-H."/>
            <person name="Sanchis V."/>
            <person name="Nguen-the C."/>
            <person name="Lereclus D."/>
            <person name="Richardson P."/>
            <person name="Wincker P."/>
            <person name="Weissenbach J."/>
            <person name="Ehrlich S.D."/>
            <person name="Sorokin A."/>
        </authorList>
    </citation>
    <scope>NUCLEOTIDE SEQUENCE [LARGE SCALE GENOMIC DNA]</scope>
    <source>
        <strain>KBAB4</strain>
    </source>
</reference>
<dbReference type="EC" id="2.1.2.3" evidence="1"/>
<dbReference type="EC" id="3.5.4.10" evidence="1"/>
<dbReference type="EMBL" id="CP000903">
    <property type="protein sequence ID" value="ABY41545.1"/>
    <property type="molecule type" value="Genomic_DNA"/>
</dbReference>
<dbReference type="RefSeq" id="WP_012260225.1">
    <property type="nucleotide sequence ID" value="NC_010184.1"/>
</dbReference>
<dbReference type="SMR" id="A9VRF5"/>
<dbReference type="KEGG" id="bwe:BcerKBAB4_0279"/>
<dbReference type="eggNOG" id="COG0138">
    <property type="taxonomic scope" value="Bacteria"/>
</dbReference>
<dbReference type="HOGENOM" id="CLU_016316_5_2_9"/>
<dbReference type="UniPathway" id="UPA00074">
    <property type="reaction ID" value="UER00133"/>
</dbReference>
<dbReference type="UniPathway" id="UPA00074">
    <property type="reaction ID" value="UER00135"/>
</dbReference>
<dbReference type="Proteomes" id="UP000002154">
    <property type="component" value="Chromosome"/>
</dbReference>
<dbReference type="GO" id="GO:0005829">
    <property type="term" value="C:cytosol"/>
    <property type="evidence" value="ECO:0007669"/>
    <property type="project" value="TreeGrafter"/>
</dbReference>
<dbReference type="GO" id="GO:0003937">
    <property type="term" value="F:IMP cyclohydrolase activity"/>
    <property type="evidence" value="ECO:0007669"/>
    <property type="project" value="UniProtKB-UniRule"/>
</dbReference>
<dbReference type="GO" id="GO:0004643">
    <property type="term" value="F:phosphoribosylaminoimidazolecarboxamide formyltransferase activity"/>
    <property type="evidence" value="ECO:0007669"/>
    <property type="project" value="UniProtKB-UniRule"/>
</dbReference>
<dbReference type="GO" id="GO:0006189">
    <property type="term" value="P:'de novo' IMP biosynthetic process"/>
    <property type="evidence" value="ECO:0007669"/>
    <property type="project" value="UniProtKB-UniRule"/>
</dbReference>
<dbReference type="CDD" id="cd01421">
    <property type="entry name" value="IMPCH"/>
    <property type="match status" value="1"/>
</dbReference>
<dbReference type="FunFam" id="3.40.140.20:FF:000001">
    <property type="entry name" value="Bifunctional purine biosynthesis protein PurH"/>
    <property type="match status" value="1"/>
</dbReference>
<dbReference type="FunFam" id="3.40.140.20:FF:000002">
    <property type="entry name" value="Bifunctional purine biosynthesis protein PurH"/>
    <property type="match status" value="1"/>
</dbReference>
<dbReference type="FunFam" id="3.40.50.1380:FF:000001">
    <property type="entry name" value="Bifunctional purine biosynthesis protein PurH"/>
    <property type="match status" value="1"/>
</dbReference>
<dbReference type="Gene3D" id="3.40.140.20">
    <property type="match status" value="2"/>
</dbReference>
<dbReference type="Gene3D" id="3.40.50.1380">
    <property type="entry name" value="Methylglyoxal synthase-like domain"/>
    <property type="match status" value="1"/>
</dbReference>
<dbReference type="HAMAP" id="MF_00139">
    <property type="entry name" value="PurH"/>
    <property type="match status" value="1"/>
</dbReference>
<dbReference type="InterPro" id="IPR024051">
    <property type="entry name" value="AICAR_Tfase_dup_dom_sf"/>
</dbReference>
<dbReference type="InterPro" id="IPR016193">
    <property type="entry name" value="Cytidine_deaminase-like"/>
</dbReference>
<dbReference type="InterPro" id="IPR011607">
    <property type="entry name" value="MGS-like_dom"/>
</dbReference>
<dbReference type="InterPro" id="IPR036914">
    <property type="entry name" value="MGS-like_dom_sf"/>
</dbReference>
<dbReference type="InterPro" id="IPR002695">
    <property type="entry name" value="PurH-like"/>
</dbReference>
<dbReference type="NCBIfam" id="NF002049">
    <property type="entry name" value="PRK00881.1"/>
    <property type="match status" value="1"/>
</dbReference>
<dbReference type="NCBIfam" id="TIGR00355">
    <property type="entry name" value="purH"/>
    <property type="match status" value="1"/>
</dbReference>
<dbReference type="PANTHER" id="PTHR11692:SF0">
    <property type="entry name" value="BIFUNCTIONAL PURINE BIOSYNTHESIS PROTEIN ATIC"/>
    <property type="match status" value="1"/>
</dbReference>
<dbReference type="PANTHER" id="PTHR11692">
    <property type="entry name" value="BIFUNCTIONAL PURINE BIOSYNTHESIS PROTEIN PURH"/>
    <property type="match status" value="1"/>
</dbReference>
<dbReference type="Pfam" id="PF01808">
    <property type="entry name" value="AICARFT_IMPCHas"/>
    <property type="match status" value="1"/>
</dbReference>
<dbReference type="Pfam" id="PF02142">
    <property type="entry name" value="MGS"/>
    <property type="match status" value="1"/>
</dbReference>
<dbReference type="PIRSF" id="PIRSF000414">
    <property type="entry name" value="AICARFT_IMPCHas"/>
    <property type="match status" value="1"/>
</dbReference>
<dbReference type="SMART" id="SM00798">
    <property type="entry name" value="AICARFT_IMPCHas"/>
    <property type="match status" value="1"/>
</dbReference>
<dbReference type="SMART" id="SM00851">
    <property type="entry name" value="MGS"/>
    <property type="match status" value="1"/>
</dbReference>
<dbReference type="SUPFAM" id="SSF53927">
    <property type="entry name" value="Cytidine deaminase-like"/>
    <property type="match status" value="1"/>
</dbReference>
<dbReference type="SUPFAM" id="SSF52335">
    <property type="entry name" value="Methylglyoxal synthase-like"/>
    <property type="match status" value="1"/>
</dbReference>
<dbReference type="PROSITE" id="PS51855">
    <property type="entry name" value="MGS"/>
    <property type="match status" value="1"/>
</dbReference>
<evidence type="ECO:0000255" key="1">
    <source>
        <dbReference type="HAMAP-Rule" id="MF_00139"/>
    </source>
</evidence>
<evidence type="ECO:0000255" key="2">
    <source>
        <dbReference type="PROSITE-ProRule" id="PRU01202"/>
    </source>
</evidence>
<keyword id="KW-0378">Hydrolase</keyword>
<keyword id="KW-0511">Multifunctional enzyme</keyword>
<keyword id="KW-0658">Purine biosynthesis</keyword>
<keyword id="KW-0808">Transferase</keyword>
<protein>
    <recommendedName>
        <fullName evidence="1">Bifunctional purine biosynthesis protein PurH</fullName>
    </recommendedName>
    <domain>
        <recommendedName>
            <fullName evidence="1">Phosphoribosylaminoimidazolecarboxamide formyltransferase</fullName>
            <ecNumber evidence="1">2.1.2.3</ecNumber>
        </recommendedName>
        <alternativeName>
            <fullName evidence="1">AICAR transformylase</fullName>
        </alternativeName>
    </domain>
    <domain>
        <recommendedName>
            <fullName evidence="1">IMP cyclohydrolase</fullName>
            <ecNumber evidence="1">3.5.4.10</ecNumber>
        </recommendedName>
        <alternativeName>
            <fullName evidence="1">ATIC</fullName>
        </alternativeName>
        <alternativeName>
            <fullName evidence="1">IMP synthase</fullName>
        </alternativeName>
        <alternativeName>
            <fullName evidence="1">Inosinicase</fullName>
        </alternativeName>
    </domain>
</protein>
<feature type="chain" id="PRO_1000096040" description="Bifunctional purine biosynthesis protein PurH">
    <location>
        <begin position="1"/>
        <end position="511"/>
    </location>
</feature>
<feature type="domain" description="MGS-like" evidence="2">
    <location>
        <begin position="1"/>
        <end position="145"/>
    </location>
</feature>
<sequence length="511" mass="55499">MKKRALVSVSDKTGVVEFVKGLLEQGIEVISTGGTKKLLEENGLQVIGISEVTGFPEIMDGRVKTLHPNIHGGLLAVRDNEMHVAQMNELGIQPIDFVVVNLYPFKETIAKPDVTFADAIENIDIGGPTMIRSAAKNHKFVSVIVDPVDYDVVLAELKENGEVTEETKRKLAAKVFRHTAAYDALISNYLTKQMGEESPETVTVTFEKKQDLRYGENPHQKATFYKAPFAATSSVAYAEQLHGKELSYNNINDADAALSIVKEFTEPAVVAVKHMNPCGVGVGADIHEAYTRAYEADPVSIFGGIIAANREIDKATAEKLHEIFLEIVIAPSFSQEALEVLQSKKNLRLLTVNIEKATSASKKLTSVQGGLLVQEEDTLSLDEDAISIPTKREPSEQEWKDLKLAWKVVKHVKSNAIVLANDNMTVGVGAGQMNRVGSAKIAITQAGEKAQGSALASDAFFPMPDTVEEAAKAGITAIIQPGGSIRDEDSIKMADAYGITMVFTGVRHFKH</sequence>
<comment type="catalytic activity">
    <reaction evidence="1">
        <text>(6R)-10-formyltetrahydrofolate + 5-amino-1-(5-phospho-beta-D-ribosyl)imidazole-4-carboxamide = 5-formamido-1-(5-phospho-D-ribosyl)imidazole-4-carboxamide + (6S)-5,6,7,8-tetrahydrofolate</text>
        <dbReference type="Rhea" id="RHEA:22192"/>
        <dbReference type="ChEBI" id="CHEBI:57453"/>
        <dbReference type="ChEBI" id="CHEBI:58467"/>
        <dbReference type="ChEBI" id="CHEBI:58475"/>
        <dbReference type="ChEBI" id="CHEBI:195366"/>
        <dbReference type="EC" id="2.1.2.3"/>
    </reaction>
</comment>
<comment type="catalytic activity">
    <reaction evidence="1">
        <text>IMP + H2O = 5-formamido-1-(5-phospho-D-ribosyl)imidazole-4-carboxamide</text>
        <dbReference type="Rhea" id="RHEA:18445"/>
        <dbReference type="ChEBI" id="CHEBI:15377"/>
        <dbReference type="ChEBI" id="CHEBI:58053"/>
        <dbReference type="ChEBI" id="CHEBI:58467"/>
        <dbReference type="EC" id="3.5.4.10"/>
    </reaction>
</comment>
<comment type="pathway">
    <text evidence="1">Purine metabolism; IMP biosynthesis via de novo pathway; 5-formamido-1-(5-phospho-D-ribosyl)imidazole-4-carboxamide from 5-amino-1-(5-phospho-D-ribosyl)imidazole-4-carboxamide (10-formyl THF route): step 1/1.</text>
</comment>
<comment type="pathway">
    <text evidence="1">Purine metabolism; IMP biosynthesis via de novo pathway; IMP from 5-formamido-1-(5-phospho-D-ribosyl)imidazole-4-carboxamide: step 1/1.</text>
</comment>
<comment type="domain">
    <text evidence="1">The IMP cyclohydrolase activity resides in the N-terminal region.</text>
</comment>
<comment type="similarity">
    <text evidence="1">Belongs to the PurH family.</text>
</comment>
<proteinExistence type="inferred from homology"/>
<organism>
    <name type="scientific">Bacillus mycoides (strain KBAB4)</name>
    <name type="common">Bacillus weihenstephanensis</name>
    <dbReference type="NCBI Taxonomy" id="315730"/>
    <lineage>
        <taxon>Bacteria</taxon>
        <taxon>Bacillati</taxon>
        <taxon>Bacillota</taxon>
        <taxon>Bacilli</taxon>
        <taxon>Bacillales</taxon>
        <taxon>Bacillaceae</taxon>
        <taxon>Bacillus</taxon>
        <taxon>Bacillus cereus group</taxon>
    </lineage>
</organism>